<accession>B5BGJ4</accession>
<name>RBFA_SALPK</name>
<organism>
    <name type="scientific">Salmonella paratyphi A (strain AKU_12601)</name>
    <dbReference type="NCBI Taxonomy" id="554290"/>
    <lineage>
        <taxon>Bacteria</taxon>
        <taxon>Pseudomonadati</taxon>
        <taxon>Pseudomonadota</taxon>
        <taxon>Gammaproteobacteria</taxon>
        <taxon>Enterobacterales</taxon>
        <taxon>Enterobacteriaceae</taxon>
        <taxon>Salmonella</taxon>
    </lineage>
</organism>
<gene>
    <name evidence="1" type="primary">rbfA</name>
    <name type="ordered locus">SSPA2943</name>
</gene>
<sequence>MAKEFGRPQRVAQEMQKEIALILQREIKDPRVGMMTTVSGVEMSRDLAYAKVFVTFLNDQDEAAVKNGIKALQEASGFIRSLLGKAMRLRIVPELTFFYDNSLVEGMRMSNLVTNVVKHDEERRVNPDDSKED</sequence>
<feature type="chain" id="PRO_1000088929" description="Ribosome-binding factor A">
    <location>
        <begin position="1"/>
        <end position="133"/>
    </location>
</feature>
<dbReference type="EMBL" id="FM200053">
    <property type="protein sequence ID" value="CAR61192.1"/>
    <property type="molecule type" value="Genomic_DNA"/>
</dbReference>
<dbReference type="RefSeq" id="WP_001040208.1">
    <property type="nucleotide sequence ID" value="NC_011147.1"/>
</dbReference>
<dbReference type="SMR" id="B5BGJ4"/>
<dbReference type="KEGG" id="sek:SSPA2943"/>
<dbReference type="HOGENOM" id="CLU_089475_5_0_6"/>
<dbReference type="Proteomes" id="UP000001869">
    <property type="component" value="Chromosome"/>
</dbReference>
<dbReference type="GO" id="GO:0005829">
    <property type="term" value="C:cytosol"/>
    <property type="evidence" value="ECO:0007669"/>
    <property type="project" value="TreeGrafter"/>
</dbReference>
<dbReference type="GO" id="GO:0043024">
    <property type="term" value="F:ribosomal small subunit binding"/>
    <property type="evidence" value="ECO:0007669"/>
    <property type="project" value="TreeGrafter"/>
</dbReference>
<dbReference type="GO" id="GO:0030490">
    <property type="term" value="P:maturation of SSU-rRNA"/>
    <property type="evidence" value="ECO:0007669"/>
    <property type="project" value="UniProtKB-UniRule"/>
</dbReference>
<dbReference type="FunFam" id="3.30.300.20:FF:000007">
    <property type="entry name" value="Ribosome-binding factor A"/>
    <property type="match status" value="1"/>
</dbReference>
<dbReference type="Gene3D" id="3.30.300.20">
    <property type="match status" value="1"/>
</dbReference>
<dbReference type="HAMAP" id="MF_00003">
    <property type="entry name" value="RbfA"/>
    <property type="match status" value="1"/>
</dbReference>
<dbReference type="InterPro" id="IPR015946">
    <property type="entry name" value="KH_dom-like_a/b"/>
</dbReference>
<dbReference type="InterPro" id="IPR000238">
    <property type="entry name" value="RbfA"/>
</dbReference>
<dbReference type="InterPro" id="IPR023799">
    <property type="entry name" value="RbfA_dom_sf"/>
</dbReference>
<dbReference type="InterPro" id="IPR020053">
    <property type="entry name" value="Ribosome-bd_factorA_CS"/>
</dbReference>
<dbReference type="NCBIfam" id="TIGR00082">
    <property type="entry name" value="rbfA"/>
    <property type="match status" value="1"/>
</dbReference>
<dbReference type="PANTHER" id="PTHR33515">
    <property type="entry name" value="RIBOSOME-BINDING FACTOR A, CHLOROPLASTIC-RELATED"/>
    <property type="match status" value="1"/>
</dbReference>
<dbReference type="PANTHER" id="PTHR33515:SF1">
    <property type="entry name" value="RIBOSOME-BINDING FACTOR A, CHLOROPLASTIC-RELATED"/>
    <property type="match status" value="1"/>
</dbReference>
<dbReference type="Pfam" id="PF02033">
    <property type="entry name" value="RBFA"/>
    <property type="match status" value="1"/>
</dbReference>
<dbReference type="SUPFAM" id="SSF89919">
    <property type="entry name" value="Ribosome-binding factor A, RbfA"/>
    <property type="match status" value="1"/>
</dbReference>
<dbReference type="PROSITE" id="PS01319">
    <property type="entry name" value="RBFA"/>
    <property type="match status" value="1"/>
</dbReference>
<protein>
    <recommendedName>
        <fullName evidence="1">Ribosome-binding factor A</fullName>
    </recommendedName>
</protein>
<comment type="function">
    <text evidence="1">One of several proteins that assist in the late maturation steps of the functional core of the 30S ribosomal subunit. Associates with free 30S ribosomal subunits (but not with 30S subunits that are part of 70S ribosomes or polysomes). Required for efficient processing of 16S rRNA. May interact with the 5'-terminal helix region of 16S rRNA.</text>
</comment>
<comment type="subunit">
    <text evidence="1">Monomer. Binds 30S ribosomal subunits, but not 50S ribosomal subunits or 70S ribosomes.</text>
</comment>
<comment type="subcellular location">
    <subcellularLocation>
        <location evidence="1">Cytoplasm</location>
    </subcellularLocation>
</comment>
<comment type="similarity">
    <text evidence="1">Belongs to the RbfA family.</text>
</comment>
<keyword id="KW-0963">Cytoplasm</keyword>
<keyword id="KW-0690">Ribosome biogenesis</keyword>
<reference key="1">
    <citation type="journal article" date="2009" name="BMC Genomics">
        <title>Pseudogene accumulation in the evolutionary histories of Salmonella enterica serovars Paratyphi A and Typhi.</title>
        <authorList>
            <person name="Holt K.E."/>
            <person name="Thomson N.R."/>
            <person name="Wain J."/>
            <person name="Langridge G.C."/>
            <person name="Hasan R."/>
            <person name="Bhutta Z.A."/>
            <person name="Quail M.A."/>
            <person name="Norbertczak H."/>
            <person name="Walker D."/>
            <person name="Simmonds M."/>
            <person name="White B."/>
            <person name="Bason N."/>
            <person name="Mungall K."/>
            <person name="Dougan G."/>
            <person name="Parkhill J."/>
        </authorList>
    </citation>
    <scope>NUCLEOTIDE SEQUENCE [LARGE SCALE GENOMIC DNA]</scope>
    <source>
        <strain>AKU_12601</strain>
    </source>
</reference>
<proteinExistence type="inferred from homology"/>
<evidence type="ECO:0000255" key="1">
    <source>
        <dbReference type="HAMAP-Rule" id="MF_00003"/>
    </source>
</evidence>